<sequence length="632" mass="71163">MSSQEASKMLRTYNIAWWGNNYYDVNELGHISVCPDPDVPEARVDLAKLVKAREAQGQRLPALFCFPQILQHRLRSINAAFKRARESYGYNGDYFLVYPIKVNQHRRVIESLIHSGEPLGLEAGSKAELMAVLAHAGMTRSVIVCNGYKDREYIRLALIGEKMGHKVYLVIEKMSEIAIVLEEAERLNVVPRLGVRARLASQGSGKWQSSGGEKSKFGLAATQVLQLVETLRDAGRLDSLQLLHFHLGSQMANIRDIATGVRESARFYVELHKLGVNIQCFDVGGGLGVDYEGTRSQSDCSVNYGLNEYANNIIWAIGDACEEHGLPHPTVITESGRAVTAHHTVLVSNIIGVERNEYTDPTAPAEDAPRALQNLWETWQEMHKPGTRRSLREWLHDSQMDLHDIHIGYSSGAFSLQERAWAEQLYLSMCHEVQKQLDPQNRAHRPIIDELQERMADKMYVNFSLFQSMPDAWGIDQLFPVLPLEGLDQVPERRAVLLDITCDSDGAIDHYIDGDGIATTMPMPEYDPENPPMLGFFMVGAYQEILGNMHNLFGDTEAVDVFVFPDGSVEVELSDEGDTVADMLQYVQLDPKTLLTHFRDQVKQTDLDDALQQQFLEEFEAGLYGYTYLEDE</sequence>
<evidence type="ECO:0000255" key="1">
    <source>
        <dbReference type="HAMAP-Rule" id="MF_01417"/>
    </source>
</evidence>
<reference key="1">
    <citation type="submission" date="2007-11" db="EMBL/GenBank/DDBJ databases">
        <authorList>
            <consortium name="The Salmonella enterica serovar Paratyphi B Genome Sequencing Project"/>
            <person name="McClelland M."/>
            <person name="Sanderson E.K."/>
            <person name="Porwollik S."/>
            <person name="Spieth J."/>
            <person name="Clifton W.S."/>
            <person name="Fulton R."/>
            <person name="Cordes M."/>
            <person name="Wollam A."/>
            <person name="Shah N."/>
            <person name="Pepin K."/>
            <person name="Bhonagiri V."/>
            <person name="Nash W."/>
            <person name="Johnson M."/>
            <person name="Thiruvilangam P."/>
            <person name="Wilson R."/>
        </authorList>
    </citation>
    <scope>NUCLEOTIDE SEQUENCE [LARGE SCALE GENOMIC DNA]</scope>
    <source>
        <strain>ATCC BAA-1250 / SPB7</strain>
    </source>
</reference>
<comment type="function">
    <text evidence="1">Catalyzes the biosynthesis of agmatine from arginine.</text>
</comment>
<comment type="catalytic activity">
    <reaction evidence="1">
        <text>L-arginine + H(+) = agmatine + CO2</text>
        <dbReference type="Rhea" id="RHEA:17641"/>
        <dbReference type="ChEBI" id="CHEBI:15378"/>
        <dbReference type="ChEBI" id="CHEBI:16526"/>
        <dbReference type="ChEBI" id="CHEBI:32682"/>
        <dbReference type="ChEBI" id="CHEBI:58145"/>
        <dbReference type="EC" id="4.1.1.19"/>
    </reaction>
</comment>
<comment type="cofactor">
    <cofactor evidence="1">
        <name>Mg(2+)</name>
        <dbReference type="ChEBI" id="CHEBI:18420"/>
    </cofactor>
</comment>
<comment type="cofactor">
    <cofactor evidence="1">
        <name>pyridoxal 5'-phosphate</name>
        <dbReference type="ChEBI" id="CHEBI:597326"/>
    </cofactor>
</comment>
<comment type="pathway">
    <text evidence="1">Amine and polyamine biosynthesis; agmatine biosynthesis; agmatine from L-arginine: step 1/1.</text>
</comment>
<comment type="similarity">
    <text evidence="1">Belongs to the Orn/Lys/Arg decarboxylase class-II family. SpeA subfamily.</text>
</comment>
<gene>
    <name evidence="1" type="primary">speA</name>
    <name type="ordered locus">SPAB_03850</name>
</gene>
<name>SPEA_SALPB</name>
<organism>
    <name type="scientific">Salmonella paratyphi B (strain ATCC BAA-1250 / SPB7)</name>
    <dbReference type="NCBI Taxonomy" id="1016998"/>
    <lineage>
        <taxon>Bacteria</taxon>
        <taxon>Pseudomonadati</taxon>
        <taxon>Pseudomonadota</taxon>
        <taxon>Gammaproteobacteria</taxon>
        <taxon>Enterobacterales</taxon>
        <taxon>Enterobacteriaceae</taxon>
        <taxon>Salmonella</taxon>
    </lineage>
</organism>
<protein>
    <recommendedName>
        <fullName evidence="1">Biosynthetic arginine decarboxylase</fullName>
        <shortName evidence="1">ADC</shortName>
        <ecNumber evidence="1">4.1.1.19</ecNumber>
    </recommendedName>
</protein>
<feature type="chain" id="PRO_1000087405" description="Biosynthetic arginine decarboxylase">
    <location>
        <begin position="1"/>
        <end position="632"/>
    </location>
</feature>
<feature type="binding site" evidence="1">
    <location>
        <begin position="281"/>
        <end position="291"/>
    </location>
    <ligand>
        <name>substrate</name>
    </ligand>
</feature>
<feature type="modified residue" description="N6-(pyridoxal phosphate)lysine" evidence="1">
    <location>
        <position position="101"/>
    </location>
</feature>
<proteinExistence type="inferred from homology"/>
<dbReference type="EC" id="4.1.1.19" evidence="1"/>
<dbReference type="EMBL" id="CP000886">
    <property type="protein sequence ID" value="ABX69181.1"/>
    <property type="molecule type" value="Genomic_DNA"/>
</dbReference>
<dbReference type="SMR" id="A9N4N1"/>
<dbReference type="KEGG" id="spq:SPAB_03850"/>
<dbReference type="PATRIC" id="fig|1016998.12.peg.3628"/>
<dbReference type="HOGENOM" id="CLU_027243_1_0_6"/>
<dbReference type="UniPathway" id="UPA00186">
    <property type="reaction ID" value="UER00284"/>
</dbReference>
<dbReference type="Proteomes" id="UP000008556">
    <property type="component" value="Chromosome"/>
</dbReference>
<dbReference type="GO" id="GO:0008792">
    <property type="term" value="F:arginine decarboxylase activity"/>
    <property type="evidence" value="ECO:0007669"/>
    <property type="project" value="UniProtKB-UniRule"/>
</dbReference>
<dbReference type="GO" id="GO:0046872">
    <property type="term" value="F:metal ion binding"/>
    <property type="evidence" value="ECO:0007669"/>
    <property type="project" value="UniProtKB-KW"/>
</dbReference>
<dbReference type="GO" id="GO:0006527">
    <property type="term" value="P:arginine catabolic process"/>
    <property type="evidence" value="ECO:0007669"/>
    <property type="project" value="InterPro"/>
</dbReference>
<dbReference type="GO" id="GO:0033388">
    <property type="term" value="P:putrescine biosynthetic process from arginine"/>
    <property type="evidence" value="ECO:0007669"/>
    <property type="project" value="TreeGrafter"/>
</dbReference>
<dbReference type="GO" id="GO:0008295">
    <property type="term" value="P:spermidine biosynthetic process"/>
    <property type="evidence" value="ECO:0007669"/>
    <property type="project" value="UniProtKB-UniRule"/>
</dbReference>
<dbReference type="CDD" id="cd06830">
    <property type="entry name" value="PLPDE_III_ADC"/>
    <property type="match status" value="1"/>
</dbReference>
<dbReference type="FunFam" id="1.10.287.3440:FF:000001">
    <property type="entry name" value="Biosynthetic arginine decarboxylase"/>
    <property type="match status" value="1"/>
</dbReference>
<dbReference type="FunFam" id="1.20.58.930:FF:000001">
    <property type="entry name" value="Biosynthetic arginine decarboxylase"/>
    <property type="match status" value="1"/>
</dbReference>
<dbReference type="FunFam" id="2.40.37.10:FF:000001">
    <property type="entry name" value="Biosynthetic arginine decarboxylase"/>
    <property type="match status" value="1"/>
</dbReference>
<dbReference type="FunFam" id="3.20.20.10:FF:000001">
    <property type="entry name" value="Biosynthetic arginine decarboxylase"/>
    <property type="match status" value="1"/>
</dbReference>
<dbReference type="Gene3D" id="1.10.287.3440">
    <property type="match status" value="1"/>
</dbReference>
<dbReference type="Gene3D" id="1.20.58.930">
    <property type="match status" value="1"/>
</dbReference>
<dbReference type="Gene3D" id="3.20.20.10">
    <property type="entry name" value="Alanine racemase"/>
    <property type="match status" value="1"/>
</dbReference>
<dbReference type="Gene3D" id="2.40.37.10">
    <property type="entry name" value="Lyase, Ornithine Decarboxylase, Chain A, domain 1"/>
    <property type="match status" value="1"/>
</dbReference>
<dbReference type="HAMAP" id="MF_01417">
    <property type="entry name" value="SpeA"/>
    <property type="match status" value="1"/>
</dbReference>
<dbReference type="InterPro" id="IPR009006">
    <property type="entry name" value="Ala_racemase/Decarboxylase_C"/>
</dbReference>
<dbReference type="InterPro" id="IPR040634">
    <property type="entry name" value="Arg_decarb_HB"/>
</dbReference>
<dbReference type="InterPro" id="IPR041128">
    <property type="entry name" value="Arg_decarbox_C"/>
</dbReference>
<dbReference type="InterPro" id="IPR002985">
    <property type="entry name" value="Arg_decrbxlase"/>
</dbReference>
<dbReference type="InterPro" id="IPR022657">
    <property type="entry name" value="De-COase2_CS"/>
</dbReference>
<dbReference type="InterPro" id="IPR022644">
    <property type="entry name" value="De-COase2_N"/>
</dbReference>
<dbReference type="InterPro" id="IPR022653">
    <property type="entry name" value="De-COase2_pyr-phos_BS"/>
</dbReference>
<dbReference type="InterPro" id="IPR000183">
    <property type="entry name" value="Orn/DAP/Arg_de-COase"/>
</dbReference>
<dbReference type="InterPro" id="IPR029066">
    <property type="entry name" value="PLP-binding_barrel"/>
</dbReference>
<dbReference type="NCBIfam" id="NF003763">
    <property type="entry name" value="PRK05354.1"/>
    <property type="match status" value="1"/>
</dbReference>
<dbReference type="NCBIfam" id="TIGR01273">
    <property type="entry name" value="speA"/>
    <property type="match status" value="1"/>
</dbReference>
<dbReference type="PANTHER" id="PTHR43295">
    <property type="entry name" value="ARGININE DECARBOXYLASE"/>
    <property type="match status" value="1"/>
</dbReference>
<dbReference type="PANTHER" id="PTHR43295:SF9">
    <property type="entry name" value="BIOSYNTHETIC ARGININE DECARBOXYLASE"/>
    <property type="match status" value="1"/>
</dbReference>
<dbReference type="Pfam" id="PF17810">
    <property type="entry name" value="Arg_decarb_HB"/>
    <property type="match status" value="1"/>
</dbReference>
<dbReference type="Pfam" id="PF17944">
    <property type="entry name" value="Arg_decarbox_C"/>
    <property type="match status" value="1"/>
</dbReference>
<dbReference type="Pfam" id="PF02784">
    <property type="entry name" value="Orn_Arg_deC_N"/>
    <property type="match status" value="1"/>
</dbReference>
<dbReference type="PIRSF" id="PIRSF001336">
    <property type="entry name" value="Arg_decrbxlase"/>
    <property type="match status" value="1"/>
</dbReference>
<dbReference type="PRINTS" id="PR01180">
    <property type="entry name" value="ARGDCRBXLASE"/>
</dbReference>
<dbReference type="PRINTS" id="PR01179">
    <property type="entry name" value="ODADCRBXLASE"/>
</dbReference>
<dbReference type="SUPFAM" id="SSF50621">
    <property type="entry name" value="Alanine racemase C-terminal domain-like"/>
    <property type="match status" value="1"/>
</dbReference>
<dbReference type="SUPFAM" id="SSF51419">
    <property type="entry name" value="PLP-binding barrel"/>
    <property type="match status" value="1"/>
</dbReference>
<dbReference type="PROSITE" id="PS00878">
    <property type="entry name" value="ODR_DC_2_1"/>
    <property type="match status" value="1"/>
</dbReference>
<dbReference type="PROSITE" id="PS00879">
    <property type="entry name" value="ODR_DC_2_2"/>
    <property type="match status" value="1"/>
</dbReference>
<accession>A9N4N1</accession>
<keyword id="KW-0210">Decarboxylase</keyword>
<keyword id="KW-0456">Lyase</keyword>
<keyword id="KW-0460">Magnesium</keyword>
<keyword id="KW-0479">Metal-binding</keyword>
<keyword id="KW-0620">Polyamine biosynthesis</keyword>
<keyword id="KW-0661">Putrescine biosynthesis</keyword>
<keyword id="KW-0663">Pyridoxal phosphate</keyword>
<keyword id="KW-0745">Spermidine biosynthesis</keyword>